<proteinExistence type="inferred from homology"/>
<accession>Q7VXM6</accession>
<reference key="1">
    <citation type="journal article" date="2003" name="Nat. Genet.">
        <title>Comparative analysis of the genome sequences of Bordetella pertussis, Bordetella parapertussis and Bordetella bronchiseptica.</title>
        <authorList>
            <person name="Parkhill J."/>
            <person name="Sebaihia M."/>
            <person name="Preston A."/>
            <person name="Murphy L.D."/>
            <person name="Thomson N.R."/>
            <person name="Harris D.E."/>
            <person name="Holden M.T.G."/>
            <person name="Churcher C.M."/>
            <person name="Bentley S.D."/>
            <person name="Mungall K.L."/>
            <person name="Cerdeno-Tarraga A.-M."/>
            <person name="Temple L."/>
            <person name="James K.D."/>
            <person name="Harris B."/>
            <person name="Quail M.A."/>
            <person name="Achtman M."/>
            <person name="Atkin R."/>
            <person name="Baker S."/>
            <person name="Basham D."/>
            <person name="Bason N."/>
            <person name="Cherevach I."/>
            <person name="Chillingworth T."/>
            <person name="Collins M."/>
            <person name="Cronin A."/>
            <person name="Davis P."/>
            <person name="Doggett J."/>
            <person name="Feltwell T."/>
            <person name="Goble A."/>
            <person name="Hamlin N."/>
            <person name="Hauser H."/>
            <person name="Holroyd S."/>
            <person name="Jagels K."/>
            <person name="Leather S."/>
            <person name="Moule S."/>
            <person name="Norberczak H."/>
            <person name="O'Neil S."/>
            <person name="Ormond D."/>
            <person name="Price C."/>
            <person name="Rabbinowitsch E."/>
            <person name="Rutter S."/>
            <person name="Sanders M."/>
            <person name="Saunders D."/>
            <person name="Seeger K."/>
            <person name="Sharp S."/>
            <person name="Simmonds M."/>
            <person name="Skelton J."/>
            <person name="Squares R."/>
            <person name="Squares S."/>
            <person name="Stevens K."/>
            <person name="Unwin L."/>
            <person name="Whitehead S."/>
            <person name="Barrell B.G."/>
            <person name="Maskell D.J."/>
        </authorList>
    </citation>
    <scope>NUCLEOTIDE SEQUENCE [LARGE SCALE GENOMIC DNA]</scope>
    <source>
        <strain>Tohama I / ATCC BAA-589 / NCTC 13251</strain>
    </source>
</reference>
<sequence>MVDVLNIESLDLEARGIAHRDGKVLFVEGALPGERVTVQTVRRKPSYEIAKVEEVLRPSSQRVAPRCPHFGVCGGCAMQHLAPAAQVAIKQRALEDTFWHVGKLKPARILPPLYGPTWGYRYRARLSVRVVPKKGGVLVGFHERKSSYVADMRECHVLPPAVSRLLLPLRAMIAAMSAPDRMPQIEVALGDETIVLVLRHLLPLTDGDIAVLRAFAAEHGVQWWLQSKGPDTVHPLEREHADALAYTLPEFGLRMPYRPTDFTQVNHAINRAMVSRALKLLDVQPQDRVADLFCGLGNFTLPLATQGREAVGVEGSKALTDRAHEAAARHGLGERTRFATLNLFEVDVQWLRGLGYFDRMLIDPPREGAQAVAQALSLLAPGERPRRIVYVSCSPGTLARDAAIMVHEGGYALRSAGVINMFPHTGHVESIAVFESLDEATVLQAQAQARQKAREEAERLAEAAAA</sequence>
<protein>
    <recommendedName>
        <fullName evidence="1">23S rRNA (uracil(1939)-C(5))-methyltransferase RlmD</fullName>
        <ecNumber evidence="1">2.1.1.190</ecNumber>
    </recommendedName>
    <alternativeName>
        <fullName evidence="1">23S rRNA(m5U1939)-methyltransferase</fullName>
    </alternativeName>
</protein>
<name>RLMD_BORPE</name>
<keyword id="KW-0004">4Fe-4S</keyword>
<keyword id="KW-0408">Iron</keyword>
<keyword id="KW-0411">Iron-sulfur</keyword>
<keyword id="KW-0479">Metal-binding</keyword>
<keyword id="KW-0489">Methyltransferase</keyword>
<keyword id="KW-1185">Reference proteome</keyword>
<keyword id="KW-0698">rRNA processing</keyword>
<keyword id="KW-0949">S-adenosyl-L-methionine</keyword>
<keyword id="KW-0808">Transferase</keyword>
<gene>
    <name evidence="1" type="primary">rlmD</name>
    <name type="synonym">rumA</name>
    <name type="ordered locus">BP1725</name>
</gene>
<feature type="chain" id="PRO_0000161889" description="23S rRNA (uracil(1939)-C(5))-methyltransferase RlmD">
    <location>
        <begin position="1"/>
        <end position="466"/>
    </location>
</feature>
<feature type="domain" description="TRAM" evidence="1">
    <location>
        <begin position="1"/>
        <end position="54"/>
    </location>
</feature>
<feature type="active site" description="Nucleophile" evidence="1">
    <location>
        <position position="393"/>
    </location>
</feature>
<feature type="binding site" evidence="1">
    <location>
        <position position="67"/>
    </location>
    <ligand>
        <name>[4Fe-4S] cluster</name>
        <dbReference type="ChEBI" id="CHEBI:49883"/>
    </ligand>
</feature>
<feature type="binding site" evidence="1">
    <location>
        <position position="73"/>
    </location>
    <ligand>
        <name>[4Fe-4S] cluster</name>
        <dbReference type="ChEBI" id="CHEBI:49883"/>
    </ligand>
</feature>
<feature type="binding site" evidence="1">
    <location>
        <position position="76"/>
    </location>
    <ligand>
        <name>[4Fe-4S] cluster</name>
        <dbReference type="ChEBI" id="CHEBI:49883"/>
    </ligand>
</feature>
<feature type="binding site" evidence="1">
    <location>
        <position position="155"/>
    </location>
    <ligand>
        <name>[4Fe-4S] cluster</name>
        <dbReference type="ChEBI" id="CHEBI:49883"/>
    </ligand>
</feature>
<feature type="binding site" evidence="1">
    <location>
        <position position="264"/>
    </location>
    <ligand>
        <name>S-adenosyl-L-methionine</name>
        <dbReference type="ChEBI" id="CHEBI:59789"/>
    </ligand>
</feature>
<feature type="binding site" evidence="1">
    <location>
        <position position="293"/>
    </location>
    <ligand>
        <name>S-adenosyl-L-methionine</name>
        <dbReference type="ChEBI" id="CHEBI:59789"/>
    </ligand>
</feature>
<feature type="binding site" evidence="1">
    <location>
        <position position="298"/>
    </location>
    <ligand>
        <name>S-adenosyl-L-methionine</name>
        <dbReference type="ChEBI" id="CHEBI:59789"/>
    </ligand>
</feature>
<feature type="binding site" evidence="1">
    <location>
        <position position="314"/>
    </location>
    <ligand>
        <name>S-adenosyl-L-methionine</name>
        <dbReference type="ChEBI" id="CHEBI:59789"/>
    </ligand>
</feature>
<feature type="binding site" evidence="1">
    <location>
        <position position="342"/>
    </location>
    <ligand>
        <name>S-adenosyl-L-methionine</name>
        <dbReference type="ChEBI" id="CHEBI:59789"/>
    </ligand>
</feature>
<feature type="binding site" evidence="1">
    <location>
        <position position="363"/>
    </location>
    <ligand>
        <name>S-adenosyl-L-methionine</name>
        <dbReference type="ChEBI" id="CHEBI:59789"/>
    </ligand>
</feature>
<evidence type="ECO:0000255" key="1">
    <source>
        <dbReference type="HAMAP-Rule" id="MF_01010"/>
    </source>
</evidence>
<dbReference type="EC" id="2.1.1.190" evidence="1"/>
<dbReference type="EMBL" id="BX640416">
    <property type="protein sequence ID" value="CAE42012.1"/>
    <property type="molecule type" value="Genomic_DNA"/>
</dbReference>
<dbReference type="RefSeq" id="NP_880440.1">
    <property type="nucleotide sequence ID" value="NC_002929.2"/>
</dbReference>
<dbReference type="RefSeq" id="WP_003816525.1">
    <property type="nucleotide sequence ID" value="NZ_CP039022.1"/>
</dbReference>
<dbReference type="SMR" id="Q7VXM6"/>
<dbReference type="STRING" id="257313.BP1725"/>
<dbReference type="PaxDb" id="257313-BP1725"/>
<dbReference type="GeneID" id="69602098"/>
<dbReference type="KEGG" id="bpe:BP1725"/>
<dbReference type="PATRIC" id="fig|257313.5.peg.1850"/>
<dbReference type="eggNOG" id="COG2265">
    <property type="taxonomic scope" value="Bacteria"/>
</dbReference>
<dbReference type="HOGENOM" id="CLU_014689_8_2_4"/>
<dbReference type="Proteomes" id="UP000002676">
    <property type="component" value="Chromosome"/>
</dbReference>
<dbReference type="GO" id="GO:0051539">
    <property type="term" value="F:4 iron, 4 sulfur cluster binding"/>
    <property type="evidence" value="ECO:0007669"/>
    <property type="project" value="UniProtKB-KW"/>
</dbReference>
<dbReference type="GO" id="GO:0005506">
    <property type="term" value="F:iron ion binding"/>
    <property type="evidence" value="ECO:0007669"/>
    <property type="project" value="UniProtKB-UniRule"/>
</dbReference>
<dbReference type="GO" id="GO:0003723">
    <property type="term" value="F:RNA binding"/>
    <property type="evidence" value="ECO:0007669"/>
    <property type="project" value="InterPro"/>
</dbReference>
<dbReference type="GO" id="GO:0070041">
    <property type="term" value="F:rRNA (uridine-C5-)-methyltransferase activity"/>
    <property type="evidence" value="ECO:0007669"/>
    <property type="project" value="UniProtKB-UniRule"/>
</dbReference>
<dbReference type="GO" id="GO:0070475">
    <property type="term" value="P:rRNA base methylation"/>
    <property type="evidence" value="ECO:0007669"/>
    <property type="project" value="TreeGrafter"/>
</dbReference>
<dbReference type="CDD" id="cd02440">
    <property type="entry name" value="AdoMet_MTases"/>
    <property type="match status" value="1"/>
</dbReference>
<dbReference type="FunFam" id="2.40.50.140:FF:000097">
    <property type="entry name" value="23S rRNA (uracil(1939)-C(5))-methyltransferase RlmD"/>
    <property type="match status" value="1"/>
</dbReference>
<dbReference type="Gene3D" id="2.40.50.1070">
    <property type="match status" value="1"/>
</dbReference>
<dbReference type="Gene3D" id="2.40.50.140">
    <property type="entry name" value="Nucleic acid-binding proteins"/>
    <property type="match status" value="1"/>
</dbReference>
<dbReference type="Gene3D" id="3.40.50.150">
    <property type="entry name" value="Vaccinia Virus protein VP39"/>
    <property type="match status" value="1"/>
</dbReference>
<dbReference type="HAMAP" id="MF_01010">
    <property type="entry name" value="23SrRNA_methyltr_RlmD"/>
    <property type="match status" value="1"/>
</dbReference>
<dbReference type="InterPro" id="IPR001566">
    <property type="entry name" value="23S_rRNA_MeTrfase_RlmD"/>
</dbReference>
<dbReference type="InterPro" id="IPR030390">
    <property type="entry name" value="MeTrfase_TrmA_AS"/>
</dbReference>
<dbReference type="InterPro" id="IPR030391">
    <property type="entry name" value="MeTrfase_TrmA_CS"/>
</dbReference>
<dbReference type="InterPro" id="IPR012340">
    <property type="entry name" value="NA-bd_OB-fold"/>
</dbReference>
<dbReference type="InterPro" id="IPR029063">
    <property type="entry name" value="SAM-dependent_MTases_sf"/>
</dbReference>
<dbReference type="InterPro" id="IPR002792">
    <property type="entry name" value="TRAM_dom"/>
</dbReference>
<dbReference type="InterPro" id="IPR010280">
    <property type="entry name" value="U5_MeTrfase_fam"/>
</dbReference>
<dbReference type="NCBIfam" id="NF009639">
    <property type="entry name" value="PRK13168.1"/>
    <property type="match status" value="1"/>
</dbReference>
<dbReference type="NCBIfam" id="TIGR00479">
    <property type="entry name" value="rumA"/>
    <property type="match status" value="1"/>
</dbReference>
<dbReference type="PANTHER" id="PTHR11061:SF49">
    <property type="entry name" value="23S RRNA (URACIL(1939)-C(5))-METHYLTRANSFERASE RLMD"/>
    <property type="match status" value="1"/>
</dbReference>
<dbReference type="PANTHER" id="PTHR11061">
    <property type="entry name" value="RNA M5U METHYLTRANSFERASE"/>
    <property type="match status" value="1"/>
</dbReference>
<dbReference type="Pfam" id="PF01938">
    <property type="entry name" value="TRAM"/>
    <property type="match status" value="1"/>
</dbReference>
<dbReference type="Pfam" id="PF05958">
    <property type="entry name" value="tRNA_U5-meth_tr"/>
    <property type="match status" value="1"/>
</dbReference>
<dbReference type="SUPFAM" id="SSF50249">
    <property type="entry name" value="Nucleic acid-binding proteins"/>
    <property type="match status" value="1"/>
</dbReference>
<dbReference type="SUPFAM" id="SSF53335">
    <property type="entry name" value="S-adenosyl-L-methionine-dependent methyltransferases"/>
    <property type="match status" value="1"/>
</dbReference>
<dbReference type="PROSITE" id="PS51687">
    <property type="entry name" value="SAM_MT_RNA_M5U"/>
    <property type="match status" value="1"/>
</dbReference>
<dbReference type="PROSITE" id="PS50926">
    <property type="entry name" value="TRAM"/>
    <property type="match status" value="1"/>
</dbReference>
<dbReference type="PROSITE" id="PS01230">
    <property type="entry name" value="TRMA_1"/>
    <property type="match status" value="1"/>
</dbReference>
<dbReference type="PROSITE" id="PS01231">
    <property type="entry name" value="TRMA_2"/>
    <property type="match status" value="1"/>
</dbReference>
<organism>
    <name type="scientific">Bordetella pertussis (strain Tohama I / ATCC BAA-589 / NCTC 13251)</name>
    <dbReference type="NCBI Taxonomy" id="257313"/>
    <lineage>
        <taxon>Bacteria</taxon>
        <taxon>Pseudomonadati</taxon>
        <taxon>Pseudomonadota</taxon>
        <taxon>Betaproteobacteria</taxon>
        <taxon>Burkholderiales</taxon>
        <taxon>Alcaligenaceae</taxon>
        <taxon>Bordetella</taxon>
    </lineage>
</organism>
<comment type="function">
    <text evidence="1">Catalyzes the formation of 5-methyl-uridine at position 1939 (m5U1939) in 23S rRNA.</text>
</comment>
<comment type="catalytic activity">
    <reaction evidence="1">
        <text>uridine(1939) in 23S rRNA + S-adenosyl-L-methionine = 5-methyluridine(1939) in 23S rRNA + S-adenosyl-L-homocysteine + H(+)</text>
        <dbReference type="Rhea" id="RHEA:42908"/>
        <dbReference type="Rhea" id="RHEA-COMP:10278"/>
        <dbReference type="Rhea" id="RHEA-COMP:10279"/>
        <dbReference type="ChEBI" id="CHEBI:15378"/>
        <dbReference type="ChEBI" id="CHEBI:57856"/>
        <dbReference type="ChEBI" id="CHEBI:59789"/>
        <dbReference type="ChEBI" id="CHEBI:65315"/>
        <dbReference type="ChEBI" id="CHEBI:74447"/>
        <dbReference type="EC" id="2.1.1.190"/>
    </reaction>
</comment>
<comment type="similarity">
    <text evidence="1">Belongs to the class I-like SAM-binding methyltransferase superfamily. RNA M5U methyltransferase family. RlmD subfamily.</text>
</comment>